<gene>
    <name type="primary">uspG</name>
    <name type="ordered locus">STY0662</name>
    <name type="ordered locus">t2253</name>
</gene>
<accession>P67094</accession>
<accession>Q8XGB9</accession>
<sequence>MYKTIIMPVDVFEMELSDKAIRHAEFLAQQDGVIHLLHVLPGSASMSLHRFAADVRRFEEHLQHEAETRLQTMVGHFSIDPSRIKTHVRFGSVRDVVNEMGEELDADVVVIGSRNPSITTHLLGSNASSVVRHATLPVLVVR</sequence>
<reference key="1">
    <citation type="journal article" date="2001" name="Nature">
        <title>Complete genome sequence of a multiple drug resistant Salmonella enterica serovar Typhi CT18.</title>
        <authorList>
            <person name="Parkhill J."/>
            <person name="Dougan G."/>
            <person name="James K.D."/>
            <person name="Thomson N.R."/>
            <person name="Pickard D."/>
            <person name="Wain J."/>
            <person name="Churcher C.M."/>
            <person name="Mungall K.L."/>
            <person name="Bentley S.D."/>
            <person name="Holden M.T.G."/>
            <person name="Sebaihia M."/>
            <person name="Baker S."/>
            <person name="Basham D."/>
            <person name="Brooks K."/>
            <person name="Chillingworth T."/>
            <person name="Connerton P."/>
            <person name="Cronin A."/>
            <person name="Davis P."/>
            <person name="Davies R.M."/>
            <person name="Dowd L."/>
            <person name="White N."/>
            <person name="Farrar J."/>
            <person name="Feltwell T."/>
            <person name="Hamlin N."/>
            <person name="Haque A."/>
            <person name="Hien T.T."/>
            <person name="Holroyd S."/>
            <person name="Jagels K."/>
            <person name="Krogh A."/>
            <person name="Larsen T.S."/>
            <person name="Leather S."/>
            <person name="Moule S."/>
            <person name="O'Gaora P."/>
            <person name="Parry C."/>
            <person name="Quail M.A."/>
            <person name="Rutherford K.M."/>
            <person name="Simmonds M."/>
            <person name="Skelton J."/>
            <person name="Stevens K."/>
            <person name="Whitehead S."/>
            <person name="Barrell B.G."/>
        </authorList>
    </citation>
    <scope>NUCLEOTIDE SEQUENCE [LARGE SCALE GENOMIC DNA]</scope>
    <source>
        <strain>CT18</strain>
    </source>
</reference>
<reference key="2">
    <citation type="journal article" date="2003" name="J. Bacteriol.">
        <title>Comparative genomics of Salmonella enterica serovar Typhi strains Ty2 and CT18.</title>
        <authorList>
            <person name="Deng W."/>
            <person name="Liou S.-R."/>
            <person name="Plunkett G. III"/>
            <person name="Mayhew G.F."/>
            <person name="Rose D.J."/>
            <person name="Burland V."/>
            <person name="Kodoyianni V."/>
            <person name="Schwartz D.C."/>
            <person name="Blattner F.R."/>
        </authorList>
    </citation>
    <scope>NUCLEOTIDE SEQUENCE [LARGE SCALE GENOMIC DNA]</scope>
    <source>
        <strain>ATCC 700931 / Ty2</strain>
    </source>
</reference>
<proteinExistence type="inferred from homology"/>
<protein>
    <recommendedName>
        <fullName>Universal stress protein G</fullName>
    </recommendedName>
</protein>
<comment type="similarity">
    <text evidence="1">Belongs to the universal stress protein A family.</text>
</comment>
<feature type="chain" id="PRO_0000147436" description="Universal stress protein G">
    <location>
        <begin position="1"/>
        <end position="142"/>
    </location>
</feature>
<name>USPG_SALTI</name>
<dbReference type="EMBL" id="AL513382">
    <property type="protein sequence ID" value="CAD05091.1"/>
    <property type="molecule type" value="Genomic_DNA"/>
</dbReference>
<dbReference type="EMBL" id="AE014613">
    <property type="protein sequence ID" value="AAO69855.1"/>
    <property type="molecule type" value="Genomic_DNA"/>
</dbReference>
<dbReference type="RefSeq" id="NP_455191.1">
    <property type="nucleotide sequence ID" value="NC_003198.1"/>
</dbReference>
<dbReference type="RefSeq" id="WP_000278499.1">
    <property type="nucleotide sequence ID" value="NZ_WSUR01000066.1"/>
</dbReference>
<dbReference type="SMR" id="P67094"/>
<dbReference type="STRING" id="220341.gene:17584672"/>
<dbReference type="KEGG" id="stt:t2253"/>
<dbReference type="KEGG" id="sty:STY0662"/>
<dbReference type="PATRIC" id="fig|220341.7.peg.663"/>
<dbReference type="eggNOG" id="COG0589">
    <property type="taxonomic scope" value="Bacteria"/>
</dbReference>
<dbReference type="HOGENOM" id="CLU_049301_12_0_6"/>
<dbReference type="OMA" id="VIRHTHI"/>
<dbReference type="OrthoDB" id="9792500at2"/>
<dbReference type="Proteomes" id="UP000000541">
    <property type="component" value="Chromosome"/>
</dbReference>
<dbReference type="Proteomes" id="UP000002670">
    <property type="component" value="Chromosome"/>
</dbReference>
<dbReference type="CDD" id="cd00293">
    <property type="entry name" value="USP-like"/>
    <property type="match status" value="1"/>
</dbReference>
<dbReference type="Gene3D" id="3.40.50.620">
    <property type="entry name" value="HUPs"/>
    <property type="match status" value="1"/>
</dbReference>
<dbReference type="InterPro" id="IPR014729">
    <property type="entry name" value="Rossmann-like_a/b/a_fold"/>
</dbReference>
<dbReference type="InterPro" id="IPR006015">
    <property type="entry name" value="Universal_stress_UspA"/>
</dbReference>
<dbReference type="InterPro" id="IPR006016">
    <property type="entry name" value="UspA"/>
</dbReference>
<dbReference type="NCBIfam" id="NF012000">
    <property type="entry name" value="PRK15456.1"/>
    <property type="match status" value="1"/>
</dbReference>
<dbReference type="PANTHER" id="PTHR46268">
    <property type="entry name" value="STRESS RESPONSE PROTEIN NHAX"/>
    <property type="match status" value="1"/>
</dbReference>
<dbReference type="PANTHER" id="PTHR46268:SF6">
    <property type="entry name" value="UNIVERSAL STRESS PROTEIN UP12"/>
    <property type="match status" value="1"/>
</dbReference>
<dbReference type="Pfam" id="PF00582">
    <property type="entry name" value="Usp"/>
    <property type="match status" value="1"/>
</dbReference>
<dbReference type="PRINTS" id="PR01438">
    <property type="entry name" value="UNVRSLSTRESS"/>
</dbReference>
<dbReference type="SUPFAM" id="SSF52402">
    <property type="entry name" value="Adenine nucleotide alpha hydrolases-like"/>
    <property type="match status" value="1"/>
</dbReference>
<organism>
    <name type="scientific">Salmonella typhi</name>
    <dbReference type="NCBI Taxonomy" id="90370"/>
    <lineage>
        <taxon>Bacteria</taxon>
        <taxon>Pseudomonadati</taxon>
        <taxon>Pseudomonadota</taxon>
        <taxon>Gammaproteobacteria</taxon>
        <taxon>Enterobacterales</taxon>
        <taxon>Enterobacteriaceae</taxon>
        <taxon>Salmonella</taxon>
    </lineage>
</organism>
<evidence type="ECO:0000305" key="1"/>